<feature type="chain" id="PRO_0000186697" description="Nitrogen regulatory protein">
    <location>
        <begin position="1"/>
        <end position="163"/>
    </location>
</feature>
<feature type="domain" description="PTS EIIA type-2" evidence="2">
    <location>
        <begin position="12"/>
        <end position="156"/>
    </location>
</feature>
<feature type="active site" description="Tele-phosphohistidine intermediate" evidence="2">
    <location>
        <position position="73"/>
    </location>
</feature>
<reference key="1">
    <citation type="journal article" date="2002" name="Nucleic Acids Res.">
        <title>Genome sequence of Shigella flexneri 2a: insights into pathogenicity through comparison with genomes of Escherichia coli K12 and O157.</title>
        <authorList>
            <person name="Jin Q."/>
            <person name="Yuan Z."/>
            <person name="Xu J."/>
            <person name="Wang Y."/>
            <person name="Shen Y."/>
            <person name="Lu W."/>
            <person name="Wang J."/>
            <person name="Liu H."/>
            <person name="Yang J."/>
            <person name="Yang F."/>
            <person name="Zhang X."/>
            <person name="Zhang J."/>
            <person name="Yang G."/>
            <person name="Wu H."/>
            <person name="Qu D."/>
            <person name="Dong J."/>
            <person name="Sun L."/>
            <person name="Xue Y."/>
            <person name="Zhao A."/>
            <person name="Gao Y."/>
            <person name="Zhu J."/>
            <person name="Kan B."/>
            <person name="Ding K."/>
            <person name="Chen S."/>
            <person name="Cheng H."/>
            <person name="Yao Z."/>
            <person name="He B."/>
            <person name="Chen R."/>
            <person name="Ma D."/>
            <person name="Qiang B."/>
            <person name="Wen Y."/>
            <person name="Hou Y."/>
            <person name="Yu J."/>
        </authorList>
    </citation>
    <scope>NUCLEOTIDE SEQUENCE [LARGE SCALE GENOMIC DNA]</scope>
    <source>
        <strain>301 / Serotype 2a</strain>
    </source>
</reference>
<reference key="2">
    <citation type="journal article" date="2003" name="Infect. Immun.">
        <title>Complete genome sequence and comparative genomics of Shigella flexneri serotype 2a strain 2457T.</title>
        <authorList>
            <person name="Wei J."/>
            <person name="Goldberg M.B."/>
            <person name="Burland V."/>
            <person name="Venkatesan M.M."/>
            <person name="Deng W."/>
            <person name="Fournier G."/>
            <person name="Mayhew G.F."/>
            <person name="Plunkett G. III"/>
            <person name="Rose D.J."/>
            <person name="Darling A."/>
            <person name="Mau B."/>
            <person name="Perna N.T."/>
            <person name="Payne S.M."/>
            <person name="Runyen-Janecky L.J."/>
            <person name="Zhou S."/>
            <person name="Schwartz D.C."/>
            <person name="Blattner F.R."/>
        </authorList>
    </citation>
    <scope>NUCLEOTIDE SEQUENCE [LARGE SCALE GENOMIC DNA]</scope>
    <source>
        <strain>ATCC 700930 / 2457T / Serotype 2a</strain>
    </source>
</reference>
<sequence length="163" mass="17960">MTNNDTTLQLSSVLNRECTRSRVHCQSKKRALEIISELAAKQLSLPPQVVFEAILTREKMGSTGIGNGIAIPHGKLEEDTLRAVGVFVQLETPIAFDAIDNQPVDLLFALLVPADQTKTHLHTLSLVAKRLADKTICRRLRAAQSDEELYQIITDTEGTPDEA</sequence>
<accession>P69815</accession>
<accession>P31222</accession>
<keyword id="KW-0963">Cytoplasm</keyword>
<keyword id="KW-0418">Kinase</keyword>
<keyword id="KW-1185">Reference proteome</keyword>
<keyword id="KW-0808">Transferase</keyword>
<proteinExistence type="inferred from homology"/>
<name>PTSN_SHIFL</name>
<protein>
    <recommendedName>
        <fullName>Nitrogen regulatory protein</fullName>
    </recommendedName>
    <alternativeName>
        <fullName>Enzyme IIA-NTR</fullName>
    </alternativeName>
    <domain>
        <recommendedName>
            <fullName>Phosphotransferase enzyme IIA component</fullName>
        </recommendedName>
        <alternativeName>
            <fullName>PTS system EIIA component</fullName>
        </alternativeName>
    </domain>
</protein>
<dbReference type="EMBL" id="AE005674">
    <property type="protein sequence ID" value="AAN44710.2"/>
    <property type="molecule type" value="Genomic_DNA"/>
</dbReference>
<dbReference type="EMBL" id="AE014073">
    <property type="protein sequence ID" value="AAP18524.1"/>
    <property type="molecule type" value="Genomic_DNA"/>
</dbReference>
<dbReference type="RefSeq" id="NP_709003.2">
    <property type="nucleotide sequence ID" value="NC_004337.2"/>
</dbReference>
<dbReference type="RefSeq" id="WP_000183676.1">
    <property type="nucleotide sequence ID" value="NZ_WPGW01000004.1"/>
</dbReference>
<dbReference type="BMRB" id="P69815"/>
<dbReference type="SMR" id="P69815"/>
<dbReference type="STRING" id="198214.SF3244"/>
<dbReference type="PaxDb" id="198214-SF3244"/>
<dbReference type="GeneID" id="1027089"/>
<dbReference type="GeneID" id="86862399"/>
<dbReference type="KEGG" id="sfl:SF3244"/>
<dbReference type="KEGG" id="sfx:S3462"/>
<dbReference type="PATRIC" id="fig|198214.7.peg.3845"/>
<dbReference type="HOGENOM" id="CLU_072531_5_2_6"/>
<dbReference type="Proteomes" id="UP000001006">
    <property type="component" value="Chromosome"/>
</dbReference>
<dbReference type="Proteomes" id="UP000002673">
    <property type="component" value="Chromosome"/>
</dbReference>
<dbReference type="GO" id="GO:0005737">
    <property type="term" value="C:cytoplasm"/>
    <property type="evidence" value="ECO:0007669"/>
    <property type="project" value="UniProtKB-SubCell"/>
</dbReference>
<dbReference type="GO" id="GO:0016301">
    <property type="term" value="F:kinase activity"/>
    <property type="evidence" value="ECO:0007669"/>
    <property type="project" value="UniProtKB-KW"/>
</dbReference>
<dbReference type="GO" id="GO:0030295">
    <property type="term" value="F:protein kinase activator activity"/>
    <property type="evidence" value="ECO:0007669"/>
    <property type="project" value="TreeGrafter"/>
</dbReference>
<dbReference type="GO" id="GO:0008982">
    <property type="term" value="F:protein-N(PI)-phosphohistidine-sugar phosphotransferase activity"/>
    <property type="evidence" value="ECO:0007669"/>
    <property type="project" value="InterPro"/>
</dbReference>
<dbReference type="GO" id="GO:0009401">
    <property type="term" value="P:phosphoenolpyruvate-dependent sugar phosphotransferase system"/>
    <property type="evidence" value="ECO:0007669"/>
    <property type="project" value="InterPro"/>
</dbReference>
<dbReference type="CDD" id="cd00211">
    <property type="entry name" value="PTS_IIA_fru"/>
    <property type="match status" value="1"/>
</dbReference>
<dbReference type="FunFam" id="3.40.930.10:FF:000003">
    <property type="entry name" value="PTS IIA-like nitrogen regulatory protein PtsN"/>
    <property type="match status" value="1"/>
</dbReference>
<dbReference type="Gene3D" id="3.40.930.10">
    <property type="entry name" value="Mannitol-specific EII, Chain A"/>
    <property type="match status" value="1"/>
</dbReference>
<dbReference type="InterPro" id="IPR016152">
    <property type="entry name" value="PTrfase/Anion_transptr"/>
</dbReference>
<dbReference type="InterPro" id="IPR002178">
    <property type="entry name" value="PTS_EIIA_type-2_dom"/>
</dbReference>
<dbReference type="InterPro" id="IPR006320">
    <property type="entry name" value="PTS_Nitro_regul"/>
</dbReference>
<dbReference type="InterPro" id="IPR051541">
    <property type="entry name" value="PTS_SugarTrans_NitroReg"/>
</dbReference>
<dbReference type="NCBIfam" id="TIGR01419">
    <property type="entry name" value="nitro_reg_IIA"/>
    <property type="match status" value="1"/>
</dbReference>
<dbReference type="NCBIfam" id="NF008145">
    <property type="entry name" value="PRK10896.1"/>
    <property type="match status" value="1"/>
</dbReference>
<dbReference type="PANTHER" id="PTHR47738:SF1">
    <property type="entry name" value="NITROGEN REGULATORY PROTEIN"/>
    <property type="match status" value="1"/>
</dbReference>
<dbReference type="PANTHER" id="PTHR47738">
    <property type="entry name" value="PTS SYSTEM FRUCTOSE-LIKE EIIA COMPONENT-RELATED"/>
    <property type="match status" value="1"/>
</dbReference>
<dbReference type="Pfam" id="PF00359">
    <property type="entry name" value="PTS_EIIA_2"/>
    <property type="match status" value="1"/>
</dbReference>
<dbReference type="SUPFAM" id="SSF55804">
    <property type="entry name" value="Phoshotransferase/anion transport protein"/>
    <property type="match status" value="1"/>
</dbReference>
<dbReference type="PROSITE" id="PS51094">
    <property type="entry name" value="PTS_EIIA_TYPE_2"/>
    <property type="match status" value="1"/>
</dbReference>
<dbReference type="PROSITE" id="PS00372">
    <property type="entry name" value="PTS_EIIA_TYPE_2_HIS"/>
    <property type="match status" value="1"/>
</dbReference>
<gene>
    <name type="primary">ptsN</name>
    <name type="synonym">rpoP</name>
    <name type="ordered locus">SF3244</name>
    <name type="ordered locus">S3462</name>
</gene>
<evidence type="ECO:0000250" key="1"/>
<evidence type="ECO:0000255" key="2">
    <source>
        <dbReference type="PROSITE-ProRule" id="PRU00417"/>
    </source>
</evidence>
<comment type="function">
    <text evidence="1">Seems to have a role in regulating nitrogen assimilation.</text>
</comment>
<comment type="subcellular location">
    <subcellularLocation>
        <location evidence="1">Cytoplasm</location>
    </subcellularLocation>
</comment>
<comment type="domain">
    <text>The PTS EIIA type-2 domain may serve as a regulatory function, through its phosphorylation activity.</text>
</comment>
<organism>
    <name type="scientific">Shigella flexneri</name>
    <dbReference type="NCBI Taxonomy" id="623"/>
    <lineage>
        <taxon>Bacteria</taxon>
        <taxon>Pseudomonadati</taxon>
        <taxon>Pseudomonadota</taxon>
        <taxon>Gammaproteobacteria</taxon>
        <taxon>Enterobacterales</taxon>
        <taxon>Enterobacteriaceae</taxon>
        <taxon>Shigella</taxon>
    </lineage>
</organism>